<keyword id="KW-0378">Hydrolase</keyword>
<keyword id="KW-0460">Magnesium</keyword>
<keyword id="KW-0479">Metal-binding</keyword>
<protein>
    <recommendedName>
        <fullName evidence="1">Acid sugar phosphatase</fullName>
        <ecNumber evidence="1">3.1.3.-</ecNumber>
    </recommendedName>
</protein>
<dbReference type="EC" id="3.1.3.-" evidence="1"/>
<dbReference type="EMBL" id="BA000033">
    <property type="protein sequence ID" value="BAB94676.1"/>
    <property type="molecule type" value="Genomic_DNA"/>
</dbReference>
<dbReference type="RefSeq" id="WP_000816184.1">
    <property type="nucleotide sequence ID" value="NC_003923.1"/>
</dbReference>
<dbReference type="SMR" id="Q7A1D4"/>
<dbReference type="KEGG" id="sam:MW0811"/>
<dbReference type="HOGENOM" id="CLU_043473_1_1_9"/>
<dbReference type="GO" id="GO:0005737">
    <property type="term" value="C:cytoplasm"/>
    <property type="evidence" value="ECO:0007669"/>
    <property type="project" value="TreeGrafter"/>
</dbReference>
<dbReference type="GO" id="GO:0046872">
    <property type="term" value="F:metal ion binding"/>
    <property type="evidence" value="ECO:0007669"/>
    <property type="project" value="UniProtKB-KW"/>
</dbReference>
<dbReference type="GO" id="GO:0016791">
    <property type="term" value="F:phosphatase activity"/>
    <property type="evidence" value="ECO:0007669"/>
    <property type="project" value="TreeGrafter"/>
</dbReference>
<dbReference type="CDD" id="cd07530">
    <property type="entry name" value="HAD_Pase_UmpH-like"/>
    <property type="match status" value="1"/>
</dbReference>
<dbReference type="FunFam" id="3.40.50.1000:FF:000053">
    <property type="entry name" value="TIGR01457 family HAD hydrolase"/>
    <property type="match status" value="1"/>
</dbReference>
<dbReference type="Gene3D" id="3.40.50.1000">
    <property type="entry name" value="HAD superfamily/HAD-like"/>
    <property type="match status" value="2"/>
</dbReference>
<dbReference type="InterPro" id="IPR036412">
    <property type="entry name" value="HAD-like_sf"/>
</dbReference>
<dbReference type="InterPro" id="IPR006357">
    <property type="entry name" value="HAD-SF_hydro_IIA"/>
</dbReference>
<dbReference type="InterPro" id="IPR006354">
    <property type="entry name" value="HAD-SF_hydro_IIA_hyp1"/>
</dbReference>
<dbReference type="InterPro" id="IPR023214">
    <property type="entry name" value="HAD_sf"/>
</dbReference>
<dbReference type="NCBIfam" id="TIGR01460">
    <property type="entry name" value="HAD-SF-IIA"/>
    <property type="match status" value="1"/>
</dbReference>
<dbReference type="NCBIfam" id="TIGR01457">
    <property type="entry name" value="HAD-SF-IIA-hyp2"/>
    <property type="match status" value="1"/>
</dbReference>
<dbReference type="PANTHER" id="PTHR19288">
    <property type="entry name" value="4-NITROPHENYLPHOSPHATASE-RELATED"/>
    <property type="match status" value="1"/>
</dbReference>
<dbReference type="PANTHER" id="PTHR19288:SF46">
    <property type="entry name" value="HALOACID DEHALOGENASE-LIKE HYDROLASE DOMAIN-CONTAINING PROTEIN 2"/>
    <property type="match status" value="1"/>
</dbReference>
<dbReference type="Pfam" id="PF13344">
    <property type="entry name" value="Hydrolase_6"/>
    <property type="match status" value="1"/>
</dbReference>
<dbReference type="Pfam" id="PF13242">
    <property type="entry name" value="Hydrolase_like"/>
    <property type="match status" value="1"/>
</dbReference>
<dbReference type="PIRSF" id="PIRSF000915">
    <property type="entry name" value="PGP-type_phosphatase"/>
    <property type="match status" value="1"/>
</dbReference>
<dbReference type="SFLD" id="SFLDG01139">
    <property type="entry name" value="C2.A:_Pyridoxal_Phosphate_Phos"/>
    <property type="match status" value="1"/>
</dbReference>
<dbReference type="SFLD" id="SFLDS00003">
    <property type="entry name" value="Haloacid_Dehalogenase"/>
    <property type="match status" value="1"/>
</dbReference>
<dbReference type="SUPFAM" id="SSF56784">
    <property type="entry name" value="HAD-like"/>
    <property type="match status" value="1"/>
</dbReference>
<sequence length="259" mass="27946">MKQYKAYLIDLDGTMYMGTDEIDGAKQFIDYLNVKGIPHLYVTNNSTKTPEQVTEKLREMHIDAKPEEVVTSALATADYISEQSPGASVYMLGGSGLNTALTEAGLVIKNDEHVDYVVIGLDEQVTYEKLAIATLGVRNGATFISTNPDVSIPKERGLLPGNGAITSVVSVSTGVSPQFIGKPEPIIMVKALEILGLDKSEVAMVGDLYDTDIMSGINVGMDTIHVQTGVSTLEDVQNKNVPPTYSFKDLNEAIAELEK</sequence>
<proteinExistence type="inferred from homology"/>
<accession>Q7A1D4</accession>
<gene>
    <name type="primary">nagD</name>
    <name type="ordered locus">MW0811</name>
</gene>
<reference key="1">
    <citation type="journal article" date="2002" name="Lancet">
        <title>Genome and virulence determinants of high virulence community-acquired MRSA.</title>
        <authorList>
            <person name="Baba T."/>
            <person name="Takeuchi F."/>
            <person name="Kuroda M."/>
            <person name="Yuzawa H."/>
            <person name="Aoki K."/>
            <person name="Oguchi A."/>
            <person name="Nagai Y."/>
            <person name="Iwama N."/>
            <person name="Asano K."/>
            <person name="Naimi T."/>
            <person name="Kuroda H."/>
            <person name="Cui L."/>
            <person name="Yamamoto K."/>
            <person name="Hiramatsu K."/>
        </authorList>
    </citation>
    <scope>NUCLEOTIDE SEQUENCE [LARGE SCALE GENOMIC DNA]</scope>
    <source>
        <strain>MW2</strain>
    </source>
</reference>
<comment type="function">
    <text evidence="1">Catalyzes the dephosphorylation of 2-6 carbon acid sugars in vitro.</text>
</comment>
<comment type="cofactor">
    <cofactor evidence="1">
        <name>Mg(2+)</name>
        <dbReference type="ChEBI" id="CHEBI:18420"/>
    </cofactor>
</comment>
<comment type="similarity">
    <text evidence="2">Belongs to the HAD-like hydrolase superfamily. NagD family.</text>
</comment>
<feature type="chain" id="PRO_0000271486" description="Acid sugar phosphatase">
    <location>
        <begin position="1"/>
        <end position="259"/>
    </location>
</feature>
<name>NAGD_STAAW</name>
<organism>
    <name type="scientific">Staphylococcus aureus (strain MW2)</name>
    <dbReference type="NCBI Taxonomy" id="196620"/>
    <lineage>
        <taxon>Bacteria</taxon>
        <taxon>Bacillati</taxon>
        <taxon>Bacillota</taxon>
        <taxon>Bacilli</taxon>
        <taxon>Bacillales</taxon>
        <taxon>Staphylococcaceae</taxon>
        <taxon>Staphylococcus</taxon>
    </lineage>
</organism>
<evidence type="ECO:0000250" key="1">
    <source>
        <dbReference type="UniProtKB" id="Q99VE8"/>
    </source>
</evidence>
<evidence type="ECO:0000305" key="2"/>